<dbReference type="EMBL" id="CP000253">
    <property type="protein sequence ID" value="ABD30695.1"/>
    <property type="molecule type" value="Genomic_DNA"/>
</dbReference>
<dbReference type="RefSeq" id="WP_001124985.1">
    <property type="nucleotide sequence ID" value="NZ_LS483365.1"/>
</dbReference>
<dbReference type="RefSeq" id="YP_500131.1">
    <property type="nucleotide sequence ID" value="NC_007795.1"/>
</dbReference>
<dbReference type="SMR" id="Q2FY49"/>
<dbReference type="STRING" id="93061.SAOUHSC_01617"/>
<dbReference type="PaxDb" id="1280-SAXN108_1544"/>
<dbReference type="GeneID" id="3920032"/>
<dbReference type="GeneID" id="98345891"/>
<dbReference type="KEGG" id="sao:SAOUHSC_01617"/>
<dbReference type="PATRIC" id="fig|93061.5.peg.1471"/>
<dbReference type="eggNOG" id="COG1438">
    <property type="taxonomic scope" value="Bacteria"/>
</dbReference>
<dbReference type="HOGENOM" id="CLU_097103_3_0_9"/>
<dbReference type="OrthoDB" id="9807089at2"/>
<dbReference type="UniPathway" id="UPA00068"/>
<dbReference type="PRO" id="PR:Q2FY49"/>
<dbReference type="Proteomes" id="UP000008816">
    <property type="component" value="Chromosome"/>
</dbReference>
<dbReference type="GO" id="GO:0005737">
    <property type="term" value="C:cytoplasm"/>
    <property type="evidence" value="ECO:0007669"/>
    <property type="project" value="UniProtKB-SubCell"/>
</dbReference>
<dbReference type="GO" id="GO:0005667">
    <property type="term" value="C:transcription regulator complex"/>
    <property type="evidence" value="ECO:0000318"/>
    <property type="project" value="GO_Central"/>
</dbReference>
<dbReference type="GO" id="GO:0034618">
    <property type="term" value="F:arginine binding"/>
    <property type="evidence" value="ECO:0007669"/>
    <property type="project" value="InterPro"/>
</dbReference>
<dbReference type="GO" id="GO:0000987">
    <property type="term" value="F:cis-regulatory region sequence-specific DNA binding"/>
    <property type="evidence" value="ECO:0000318"/>
    <property type="project" value="GO_Central"/>
</dbReference>
<dbReference type="GO" id="GO:0003700">
    <property type="term" value="F:DNA-binding transcription factor activity"/>
    <property type="evidence" value="ECO:0007669"/>
    <property type="project" value="UniProtKB-UniRule"/>
</dbReference>
<dbReference type="GO" id="GO:0006526">
    <property type="term" value="P:L-arginine biosynthetic process"/>
    <property type="evidence" value="ECO:0007669"/>
    <property type="project" value="UniProtKB-UniPathway"/>
</dbReference>
<dbReference type="GO" id="GO:0051259">
    <property type="term" value="P:protein complex oligomerization"/>
    <property type="evidence" value="ECO:0007669"/>
    <property type="project" value="InterPro"/>
</dbReference>
<dbReference type="GO" id="GO:1900079">
    <property type="term" value="P:regulation of arginine biosynthetic process"/>
    <property type="evidence" value="ECO:0007669"/>
    <property type="project" value="UniProtKB-UniRule"/>
</dbReference>
<dbReference type="GO" id="GO:0000821">
    <property type="term" value="P:regulation of arginine metabolic process"/>
    <property type="evidence" value="ECO:0000318"/>
    <property type="project" value="GO_Central"/>
</dbReference>
<dbReference type="Gene3D" id="3.30.1360.40">
    <property type="match status" value="1"/>
</dbReference>
<dbReference type="Gene3D" id="1.10.10.10">
    <property type="entry name" value="Winged helix-like DNA-binding domain superfamily/Winged helix DNA-binding domain"/>
    <property type="match status" value="1"/>
</dbReference>
<dbReference type="HAMAP" id="MF_00173">
    <property type="entry name" value="Arg_repressor"/>
    <property type="match status" value="1"/>
</dbReference>
<dbReference type="InterPro" id="IPR001669">
    <property type="entry name" value="Arg_repress"/>
</dbReference>
<dbReference type="InterPro" id="IPR020899">
    <property type="entry name" value="Arg_repress_C"/>
</dbReference>
<dbReference type="InterPro" id="IPR036251">
    <property type="entry name" value="Arg_repress_C_sf"/>
</dbReference>
<dbReference type="InterPro" id="IPR020900">
    <property type="entry name" value="Arg_repress_DNA-bd"/>
</dbReference>
<dbReference type="InterPro" id="IPR036388">
    <property type="entry name" value="WH-like_DNA-bd_sf"/>
</dbReference>
<dbReference type="InterPro" id="IPR036390">
    <property type="entry name" value="WH_DNA-bd_sf"/>
</dbReference>
<dbReference type="NCBIfam" id="TIGR01529">
    <property type="entry name" value="argR_whole"/>
    <property type="match status" value="1"/>
</dbReference>
<dbReference type="NCBIfam" id="NF003281">
    <property type="entry name" value="PRK04280.1"/>
    <property type="match status" value="1"/>
</dbReference>
<dbReference type="PANTHER" id="PTHR34471">
    <property type="entry name" value="ARGININE REPRESSOR"/>
    <property type="match status" value="1"/>
</dbReference>
<dbReference type="PANTHER" id="PTHR34471:SF1">
    <property type="entry name" value="ARGININE REPRESSOR"/>
    <property type="match status" value="1"/>
</dbReference>
<dbReference type="Pfam" id="PF01316">
    <property type="entry name" value="Arg_repressor"/>
    <property type="match status" value="1"/>
</dbReference>
<dbReference type="Pfam" id="PF02863">
    <property type="entry name" value="Arg_repressor_C"/>
    <property type="match status" value="1"/>
</dbReference>
<dbReference type="PRINTS" id="PR01467">
    <property type="entry name" value="ARGREPRESSOR"/>
</dbReference>
<dbReference type="SUPFAM" id="SSF55252">
    <property type="entry name" value="C-terminal domain of arginine repressor"/>
    <property type="match status" value="1"/>
</dbReference>
<dbReference type="SUPFAM" id="SSF46785">
    <property type="entry name" value="Winged helix' DNA-binding domain"/>
    <property type="match status" value="1"/>
</dbReference>
<feature type="chain" id="PRO_1000023605" description="Arginine repressor">
    <location>
        <begin position="1"/>
        <end position="150"/>
    </location>
</feature>
<organism>
    <name type="scientific">Staphylococcus aureus (strain NCTC 8325 / PS 47)</name>
    <dbReference type="NCBI Taxonomy" id="93061"/>
    <lineage>
        <taxon>Bacteria</taxon>
        <taxon>Bacillati</taxon>
        <taxon>Bacillota</taxon>
        <taxon>Bacilli</taxon>
        <taxon>Bacillales</taxon>
        <taxon>Staphylococcaceae</taxon>
        <taxon>Staphylococcus</taxon>
    </lineage>
</organism>
<accession>Q2FY49</accession>
<reference key="1">
    <citation type="book" date="2006" name="Gram positive pathogens, 2nd edition">
        <title>The Staphylococcus aureus NCTC 8325 genome.</title>
        <editorList>
            <person name="Fischetti V."/>
            <person name="Novick R."/>
            <person name="Ferretti J."/>
            <person name="Portnoy D."/>
            <person name="Rood J."/>
        </editorList>
        <authorList>
            <person name="Gillaspy A.F."/>
            <person name="Worrell V."/>
            <person name="Orvis J."/>
            <person name="Roe B.A."/>
            <person name="Dyer D.W."/>
            <person name="Iandolo J.J."/>
        </authorList>
    </citation>
    <scope>NUCLEOTIDE SEQUENCE [LARGE SCALE GENOMIC DNA]</scope>
    <source>
        <strain>NCTC 8325 / PS 47</strain>
    </source>
</reference>
<protein>
    <recommendedName>
        <fullName evidence="1">Arginine repressor</fullName>
    </recommendedName>
</protein>
<evidence type="ECO:0000255" key="1">
    <source>
        <dbReference type="HAMAP-Rule" id="MF_00173"/>
    </source>
</evidence>
<sequence length="150" mass="17098">MPKKSVRHIKIREIISNEQIETQDELVKRLNDYDLNVTQATVSRDIKELQLIKVPIPSGQYVYSLPNDRKFHPLEKLGRYLMDSFVNIDGTDNLLVLKTLPGNAQSIGAILDQINWEEVLGTICGDDTCLIICRSKEASDEIKSRIFNLL</sequence>
<name>ARGR_STAA8</name>
<proteinExistence type="inferred from homology"/>
<keyword id="KW-0028">Amino-acid biosynthesis</keyword>
<keyword id="KW-0055">Arginine biosynthesis</keyword>
<keyword id="KW-0963">Cytoplasm</keyword>
<keyword id="KW-0238">DNA-binding</keyword>
<keyword id="KW-1185">Reference proteome</keyword>
<keyword id="KW-0678">Repressor</keyword>
<keyword id="KW-0804">Transcription</keyword>
<keyword id="KW-0805">Transcription regulation</keyword>
<gene>
    <name evidence="1" type="primary">argR</name>
    <name type="ordered locus">SAOUHSC_01617</name>
</gene>
<comment type="function">
    <text evidence="1">Regulates arginine biosynthesis genes.</text>
</comment>
<comment type="pathway">
    <text>Amino-acid biosynthesis; L-arginine biosynthesis [regulation].</text>
</comment>
<comment type="subcellular location">
    <subcellularLocation>
        <location evidence="1">Cytoplasm</location>
    </subcellularLocation>
</comment>
<comment type="similarity">
    <text evidence="1">Belongs to the ArgR family.</text>
</comment>